<comment type="function">
    <text evidence="1 17">Involved in an inositol phospholipid-based intracellular signaling cascade. Shows no PLC activity to phosphatidylinositol 4,5-bisphosphate and phosphatidylinositol. Component in the phospho-dependent endocytosis process of GABA A receptor (By similarity). Regulates the turnover of receptors and thus contributes to the maintenance of GABA-mediated synaptic inhibition. Its aberrant expression could contribute to the genesis and progression of lung carcinoma. Acts as an inhibitor of PPP1C.</text>
</comment>
<comment type="subunit">
    <text evidence="1 10 11 13 14 15">Interacts with PPP2CA (By similarity). Interacts with Ins(1,4,5)P3, Ins(1,4,5,6)P4, GABARAP, GABA receptor beta subunits, GABA receptor gamma-2 subunits and PPP1C. May form a ternary complex with GABA receptor beta subunit and GABARAP. The formation of a ternary complex with GABA receptor beta subunit and GABARAP could be the key step for facilitating the association of GABARAP with the GABA receptor gamma-2 subunit and to allow it to be transported at the right destination.</text>
</comment>
<comment type="subcellular location">
    <subcellularLocation>
        <location evidence="1">Cytoplasm</location>
    </subcellularLocation>
</comment>
<comment type="alternative products">
    <event type="alternative splicing"/>
    <isoform>
        <id>Q15111-1</id>
        <name>1</name>
        <sequence type="displayed"/>
    </isoform>
    <isoform>
        <id>Q15111-2</id>
        <name>2</name>
        <sequence type="described" ref="VSP_031475"/>
    </isoform>
</comment>
<comment type="tissue specificity">
    <text evidence="16 18">Expressed in a variety of fetal and adult organs including brain, lung and kidney. Its expression was greatly reduced in small and non-small cell lung carcinoma. Isoform 1 is predominantly expressed in brain.</text>
</comment>
<comment type="PTM">
    <text evidence="1">Phosphorylated by the catalytic subunit of PKA. Phosphorylation of Thr-93 resulted in dissociation of PPP1C from PRIP1 (By similarity).</text>
</comment>
<comment type="caution">
    <text evidence="21">In the PI-PLC X-box Asn-458 is present instead of the conserved His which is one of the active site residues. It is therefore expected that this protein lacks catalytic activity.</text>
</comment>
<dbReference type="EMBL" id="D42108">
    <property type="protein sequence ID" value="BAA07688.1"/>
    <property type="molecule type" value="mRNA"/>
</dbReference>
<dbReference type="EMBL" id="AC011997">
    <property type="status" value="NOT_ANNOTATED_CDS"/>
    <property type="molecule type" value="Genomic_DNA"/>
</dbReference>
<dbReference type="EMBL" id="AC013478">
    <property type="status" value="NOT_ANNOTATED_CDS"/>
    <property type="molecule type" value="Genomic_DNA"/>
</dbReference>
<dbReference type="EMBL" id="AC020719">
    <property type="protein sequence ID" value="AAY14733.1"/>
    <property type="molecule type" value="Genomic_DNA"/>
</dbReference>
<dbReference type="EMBL" id="BC101531">
    <property type="protein sequence ID" value="AAI01532.1"/>
    <property type="molecule type" value="mRNA"/>
</dbReference>
<dbReference type="EMBL" id="BC111985">
    <property type="protein sequence ID" value="AAI11986.1"/>
    <property type="molecule type" value="mRNA"/>
</dbReference>
<dbReference type="EMBL" id="BX537442">
    <property type="protein sequence ID" value="CAD97684.1"/>
    <property type="molecule type" value="mRNA"/>
</dbReference>
<dbReference type="CCDS" id="CCDS2326.2">
    <molecule id="Q15111-1"/>
</dbReference>
<dbReference type="PIR" id="I54390">
    <property type="entry name" value="I54390"/>
</dbReference>
<dbReference type="RefSeq" id="NP_006217.3">
    <molecule id="Q15111-1"/>
    <property type="nucleotide sequence ID" value="NM_006226.4"/>
</dbReference>
<dbReference type="RefSeq" id="XP_016859829.1">
    <property type="nucleotide sequence ID" value="XM_017004340.1"/>
</dbReference>
<dbReference type="SMR" id="Q15111"/>
<dbReference type="BioGRID" id="111350">
    <property type="interactions" value="7"/>
</dbReference>
<dbReference type="FunCoup" id="Q15111">
    <property type="interactions" value="115"/>
</dbReference>
<dbReference type="IntAct" id="Q15111">
    <property type="interactions" value="2"/>
</dbReference>
<dbReference type="STRING" id="9606.ENSP00000402861"/>
<dbReference type="DrugBank" id="DB01103">
    <property type="generic name" value="Quinacrine"/>
</dbReference>
<dbReference type="GlyGen" id="Q15111">
    <property type="glycosylation" value="4 sites, 1 O-linked glycan (3 sites)"/>
</dbReference>
<dbReference type="iPTMnet" id="Q15111"/>
<dbReference type="PhosphoSitePlus" id="Q15111"/>
<dbReference type="SwissPalm" id="Q15111"/>
<dbReference type="BioMuta" id="PLCL1"/>
<dbReference type="DMDM" id="226694170"/>
<dbReference type="jPOST" id="Q15111"/>
<dbReference type="MassIVE" id="Q15111"/>
<dbReference type="PaxDb" id="9606-ENSP00000402861"/>
<dbReference type="PeptideAtlas" id="Q15111"/>
<dbReference type="ProteomicsDB" id="60440">
    <molecule id="Q15111-1"/>
</dbReference>
<dbReference type="ProteomicsDB" id="60441">
    <molecule id="Q15111-2"/>
</dbReference>
<dbReference type="Pumba" id="Q15111"/>
<dbReference type="Antibodypedia" id="34073">
    <property type="antibodies" value="146 antibodies from 25 providers"/>
</dbReference>
<dbReference type="DNASU" id="5334"/>
<dbReference type="Ensembl" id="ENST00000428675.6">
    <molecule id="Q15111-1"/>
    <property type="protein sequence ID" value="ENSP00000402861.1"/>
    <property type="gene ID" value="ENSG00000115896.17"/>
</dbReference>
<dbReference type="GeneID" id="5334"/>
<dbReference type="KEGG" id="hsa:5334"/>
<dbReference type="MANE-Select" id="ENST00000428675.6">
    <property type="protein sequence ID" value="ENSP00000402861.1"/>
    <property type="RefSeq nucleotide sequence ID" value="NM_006226.4"/>
    <property type="RefSeq protein sequence ID" value="NP_006217.3"/>
</dbReference>
<dbReference type="UCSC" id="uc010fsp.4">
    <molecule id="Q15111-1"/>
    <property type="organism name" value="human"/>
</dbReference>
<dbReference type="AGR" id="HGNC:9063"/>
<dbReference type="CTD" id="5334"/>
<dbReference type="DisGeNET" id="5334"/>
<dbReference type="GeneCards" id="PLCL1"/>
<dbReference type="HGNC" id="HGNC:9063">
    <property type="gene designation" value="PLCL1"/>
</dbReference>
<dbReference type="HPA" id="ENSG00000115896">
    <property type="expression patterns" value="Tissue enhanced (tongue)"/>
</dbReference>
<dbReference type="MIM" id="600597">
    <property type="type" value="gene"/>
</dbReference>
<dbReference type="neXtProt" id="NX_Q15111"/>
<dbReference type="OpenTargets" id="ENSG00000115896"/>
<dbReference type="PharmGKB" id="PA33394"/>
<dbReference type="VEuPathDB" id="HostDB:ENSG00000115896"/>
<dbReference type="eggNOG" id="KOG0169">
    <property type="taxonomic scope" value="Eukaryota"/>
</dbReference>
<dbReference type="GeneTree" id="ENSGT00940000158407"/>
<dbReference type="InParanoid" id="Q15111"/>
<dbReference type="OMA" id="FLWVYTH"/>
<dbReference type="OrthoDB" id="269822at2759"/>
<dbReference type="PAN-GO" id="Q15111">
    <property type="GO annotations" value="1 GO annotation based on evolutionary models"/>
</dbReference>
<dbReference type="PhylomeDB" id="Q15111"/>
<dbReference type="TreeFam" id="TF313216"/>
<dbReference type="BRENDA" id="2.7.11.10">
    <property type="organism ID" value="2681"/>
</dbReference>
<dbReference type="PathwayCommons" id="Q15111"/>
<dbReference type="SignaLink" id="Q15111"/>
<dbReference type="BioGRID-ORCS" id="5334">
    <property type="hits" value="9 hits in 1171 CRISPR screens"/>
</dbReference>
<dbReference type="ChiTaRS" id="PLCL1">
    <property type="organism name" value="human"/>
</dbReference>
<dbReference type="GenomeRNAi" id="5334"/>
<dbReference type="Pharos" id="Q15111">
    <property type="development level" value="Tbio"/>
</dbReference>
<dbReference type="PRO" id="PR:Q15111"/>
<dbReference type="Proteomes" id="UP000005640">
    <property type="component" value="Chromosome 2"/>
</dbReference>
<dbReference type="RNAct" id="Q15111">
    <property type="molecule type" value="protein"/>
</dbReference>
<dbReference type="Bgee" id="ENSG00000115896">
    <property type="expression patterns" value="Expressed in heart right ventricle and 181 other cell types or tissues"/>
</dbReference>
<dbReference type="ExpressionAtlas" id="Q15111">
    <property type="expression patterns" value="baseline and differential"/>
</dbReference>
<dbReference type="GO" id="GO:0005737">
    <property type="term" value="C:cytoplasm"/>
    <property type="evidence" value="ECO:0007669"/>
    <property type="project" value="UniProtKB-SubCell"/>
</dbReference>
<dbReference type="GO" id="GO:0004435">
    <property type="term" value="F:phosphatidylinositol-4,5-bisphosphate phospholipase C activity"/>
    <property type="evidence" value="ECO:0000318"/>
    <property type="project" value="GO_Central"/>
</dbReference>
<dbReference type="GO" id="GO:0004629">
    <property type="term" value="F:phospholipase C activity"/>
    <property type="evidence" value="ECO:0000304"/>
    <property type="project" value="ProtInc"/>
</dbReference>
<dbReference type="GO" id="GO:0007214">
    <property type="term" value="P:gamma-aminobutyric acid signaling pathway"/>
    <property type="evidence" value="ECO:0000318"/>
    <property type="project" value="GO_Central"/>
</dbReference>
<dbReference type="GO" id="GO:0035556">
    <property type="term" value="P:intracellular signal transduction"/>
    <property type="evidence" value="ECO:0000304"/>
    <property type="project" value="ProtInc"/>
</dbReference>
<dbReference type="GO" id="GO:0120163">
    <property type="term" value="P:negative regulation of cold-induced thermogenesis"/>
    <property type="evidence" value="ECO:0000250"/>
    <property type="project" value="YuBioLab"/>
</dbReference>
<dbReference type="GO" id="GO:0046488">
    <property type="term" value="P:phosphatidylinositol metabolic process"/>
    <property type="evidence" value="ECO:0000318"/>
    <property type="project" value="GO_Central"/>
</dbReference>
<dbReference type="GO" id="GO:0048015">
    <property type="term" value="P:phosphatidylinositol-mediated signaling"/>
    <property type="evidence" value="ECO:0000318"/>
    <property type="project" value="GO_Central"/>
</dbReference>
<dbReference type="GO" id="GO:0032228">
    <property type="term" value="P:regulation of synaptic transmission, GABAergic"/>
    <property type="evidence" value="ECO:0000318"/>
    <property type="project" value="GO_Central"/>
</dbReference>
<dbReference type="GO" id="GO:0051209">
    <property type="term" value="P:release of sequestered calcium ion into cytosol"/>
    <property type="evidence" value="ECO:0000318"/>
    <property type="project" value="GO_Central"/>
</dbReference>
<dbReference type="CDD" id="cd00275">
    <property type="entry name" value="C2_PLC_like"/>
    <property type="match status" value="1"/>
</dbReference>
<dbReference type="CDD" id="cd16222">
    <property type="entry name" value="EFh_PRIP1"/>
    <property type="match status" value="1"/>
</dbReference>
<dbReference type="CDD" id="cd13364">
    <property type="entry name" value="PH_PLC_eta"/>
    <property type="match status" value="1"/>
</dbReference>
<dbReference type="CDD" id="cd08597">
    <property type="entry name" value="PI-PLCc_PRIP_metazoa"/>
    <property type="match status" value="1"/>
</dbReference>
<dbReference type="FunFam" id="1.10.238.10:FF:000005">
    <property type="entry name" value="Phosphoinositide phospholipase C"/>
    <property type="match status" value="1"/>
</dbReference>
<dbReference type="FunFam" id="2.30.29.30:FF:000025">
    <property type="entry name" value="Phosphoinositide phospholipase C"/>
    <property type="match status" value="1"/>
</dbReference>
<dbReference type="FunFam" id="2.60.40.150:FF:000017">
    <property type="entry name" value="Phosphoinositide phospholipase C"/>
    <property type="match status" value="1"/>
</dbReference>
<dbReference type="FunFam" id="3.20.20.190:FF:000001">
    <property type="entry name" value="Phosphoinositide phospholipase C"/>
    <property type="match status" value="1"/>
</dbReference>
<dbReference type="Gene3D" id="2.60.40.150">
    <property type="entry name" value="C2 domain"/>
    <property type="match status" value="1"/>
</dbReference>
<dbReference type="Gene3D" id="1.10.238.10">
    <property type="entry name" value="EF-hand"/>
    <property type="match status" value="1"/>
</dbReference>
<dbReference type="Gene3D" id="3.20.20.190">
    <property type="entry name" value="Phosphatidylinositol (PI) phosphodiesterase"/>
    <property type="match status" value="1"/>
</dbReference>
<dbReference type="Gene3D" id="2.30.29.30">
    <property type="entry name" value="Pleckstrin-homology domain (PH domain)/Phosphotyrosine-binding domain (PTB)"/>
    <property type="match status" value="1"/>
</dbReference>
<dbReference type="InterPro" id="IPR000008">
    <property type="entry name" value="C2_dom"/>
</dbReference>
<dbReference type="InterPro" id="IPR035892">
    <property type="entry name" value="C2_domain_sf"/>
</dbReference>
<dbReference type="InterPro" id="IPR011992">
    <property type="entry name" value="EF-hand-dom_pair"/>
</dbReference>
<dbReference type="InterPro" id="IPR011993">
    <property type="entry name" value="PH-like_dom_sf"/>
</dbReference>
<dbReference type="InterPro" id="IPR001849">
    <property type="entry name" value="PH_domain"/>
</dbReference>
<dbReference type="InterPro" id="IPR001192">
    <property type="entry name" value="PI-PLC_fam"/>
</dbReference>
<dbReference type="InterPro" id="IPR017946">
    <property type="entry name" value="PLC-like_Pdiesterase_TIM-brl"/>
</dbReference>
<dbReference type="InterPro" id="IPR015359">
    <property type="entry name" value="PLC_EF-hand-like"/>
</dbReference>
<dbReference type="InterPro" id="IPR000909">
    <property type="entry name" value="PLipase_C_PInositol-sp_X_dom"/>
</dbReference>
<dbReference type="InterPro" id="IPR001711">
    <property type="entry name" value="PLipase_C_Pinositol-sp_Y"/>
</dbReference>
<dbReference type="PANTHER" id="PTHR10336:SF102">
    <property type="entry name" value="INACTIVE PHOSPHOLIPASE C-LIKE PROTEIN 1"/>
    <property type="match status" value="1"/>
</dbReference>
<dbReference type="PANTHER" id="PTHR10336">
    <property type="entry name" value="PHOSPHOINOSITIDE-SPECIFIC PHOSPHOLIPASE C FAMILY PROTEIN"/>
    <property type="match status" value="1"/>
</dbReference>
<dbReference type="Pfam" id="PF00168">
    <property type="entry name" value="C2"/>
    <property type="match status" value="1"/>
</dbReference>
<dbReference type="Pfam" id="PF09279">
    <property type="entry name" value="EF-hand_like"/>
    <property type="match status" value="1"/>
</dbReference>
<dbReference type="Pfam" id="PF16457">
    <property type="entry name" value="PH_12"/>
    <property type="match status" value="1"/>
</dbReference>
<dbReference type="Pfam" id="PF00388">
    <property type="entry name" value="PI-PLC-X"/>
    <property type="match status" value="1"/>
</dbReference>
<dbReference type="Pfam" id="PF00387">
    <property type="entry name" value="PI-PLC-Y"/>
    <property type="match status" value="1"/>
</dbReference>
<dbReference type="PRINTS" id="PR00390">
    <property type="entry name" value="PHPHLIPASEC"/>
</dbReference>
<dbReference type="SMART" id="SM00239">
    <property type="entry name" value="C2"/>
    <property type="match status" value="1"/>
</dbReference>
<dbReference type="SMART" id="SM00233">
    <property type="entry name" value="PH"/>
    <property type="match status" value="1"/>
</dbReference>
<dbReference type="SMART" id="SM00148">
    <property type="entry name" value="PLCXc"/>
    <property type="match status" value="1"/>
</dbReference>
<dbReference type="SMART" id="SM00149">
    <property type="entry name" value="PLCYc"/>
    <property type="match status" value="1"/>
</dbReference>
<dbReference type="SUPFAM" id="SSF49562">
    <property type="entry name" value="C2 domain (Calcium/lipid-binding domain, CaLB)"/>
    <property type="match status" value="1"/>
</dbReference>
<dbReference type="SUPFAM" id="SSF47473">
    <property type="entry name" value="EF-hand"/>
    <property type="match status" value="1"/>
</dbReference>
<dbReference type="SUPFAM" id="SSF50729">
    <property type="entry name" value="PH domain-like"/>
    <property type="match status" value="1"/>
</dbReference>
<dbReference type="SUPFAM" id="SSF51695">
    <property type="entry name" value="PLC-like phosphodiesterases"/>
    <property type="match status" value="1"/>
</dbReference>
<dbReference type="PROSITE" id="PS50004">
    <property type="entry name" value="C2"/>
    <property type="match status" value="1"/>
</dbReference>
<dbReference type="PROSITE" id="PS50003">
    <property type="entry name" value="PH_DOMAIN"/>
    <property type="match status" value="1"/>
</dbReference>
<dbReference type="PROSITE" id="PS50007">
    <property type="entry name" value="PIPLC_X_DOMAIN"/>
    <property type="match status" value="1"/>
</dbReference>
<dbReference type="PROSITE" id="PS50008">
    <property type="entry name" value="PIPLC_Y_DOMAIN"/>
    <property type="match status" value="1"/>
</dbReference>
<name>PLCL1_HUMAN</name>
<feature type="chain" id="PRO_0000319414" description="Inactive phospholipase C-like protein 1">
    <location>
        <begin position="1"/>
        <end position="1095"/>
    </location>
</feature>
<feature type="domain" description="PH" evidence="6">
    <location>
        <begin position="113"/>
        <end position="223"/>
    </location>
</feature>
<feature type="domain" description="PI-PLC X-box" evidence="7">
    <location>
        <begin position="398"/>
        <end position="542"/>
    </location>
</feature>
<feature type="domain" description="PI-PLC Y-box" evidence="8">
    <location>
        <begin position="585"/>
        <end position="701"/>
    </location>
</feature>
<feature type="domain" description="C2" evidence="5">
    <location>
        <begin position="701"/>
        <end position="830"/>
    </location>
</feature>
<feature type="region of interest" description="Disordered" evidence="9">
    <location>
        <begin position="1"/>
        <end position="61"/>
    </location>
</feature>
<feature type="region of interest" description="Interaction with PPP1C">
    <location>
        <begin position="83"/>
        <end position="222"/>
    </location>
</feature>
<feature type="region of interest" description="Interaction with GABA A beta subunit" evidence="1">
    <location>
        <begin position="543"/>
        <end position="567"/>
    </location>
</feature>
<feature type="region of interest" description="Disordered" evidence="9">
    <location>
        <begin position="1066"/>
        <end position="1095"/>
    </location>
</feature>
<feature type="coiled-coil region" evidence="4">
    <location>
        <begin position="894"/>
        <end position="914"/>
    </location>
</feature>
<feature type="coiled-coil region" evidence="4">
    <location>
        <begin position="1034"/>
        <end position="1059"/>
    </location>
</feature>
<feature type="compositionally biased region" description="Basic and acidic residues" evidence="9">
    <location>
        <begin position="1"/>
        <end position="11"/>
    </location>
</feature>
<feature type="compositionally biased region" description="Basic and acidic residues" evidence="9">
    <location>
        <begin position="1074"/>
        <end position="1095"/>
    </location>
</feature>
<feature type="modified residue" description="Phosphoserine" evidence="2">
    <location>
        <position position="47"/>
    </location>
</feature>
<feature type="modified residue" description="Phosphoserine" evidence="22">
    <location>
        <position position="77"/>
    </location>
</feature>
<feature type="modified residue" description="Phosphothreonine; by PKA" evidence="2">
    <location>
        <position position="93"/>
    </location>
</feature>
<feature type="modified residue" description="Phosphoserine" evidence="22">
    <location>
        <position position="95"/>
    </location>
</feature>
<feature type="modified residue" description="Phosphothreonine" evidence="2">
    <location>
        <position position="556"/>
    </location>
</feature>
<feature type="modified residue" description="Phosphoserine" evidence="3">
    <location>
        <position position="569"/>
    </location>
</feature>
<feature type="modified residue" description="Phosphoserine" evidence="3">
    <location>
        <position position="1079"/>
    </location>
</feature>
<feature type="splice variant" id="VSP_031475" description="In isoform 2." evidence="19 20">
    <location>
        <begin position="1"/>
        <end position="98"/>
    </location>
</feature>
<feature type="sequence variant" id="VAR_038993" description="In dbSNP:rs45506698.">
    <original>D</original>
    <variation>N</variation>
    <location>
        <position position="445"/>
    </location>
</feature>
<feature type="sequence variant" id="VAR_038994" description="In dbSNP:rs45506696.">
    <original>P</original>
    <variation>S</variation>
    <location>
        <position position="454"/>
    </location>
</feature>
<feature type="sequence variant" id="VAR_038995" description="In dbSNP:rs45596936.">
    <original>S</original>
    <variation>F</variation>
    <location>
        <position position="546"/>
    </location>
</feature>
<feature type="sequence variant" id="VAR_038996" description="In dbSNP:rs1064213." evidence="12">
    <original>V</original>
    <variation>I</variation>
    <location>
        <position position="667"/>
    </location>
</feature>
<feature type="sequence variant" id="VAR_038997" description="In dbSNP:rs6741084.">
    <original>W</original>
    <variation>C</variation>
    <location>
        <position position="684"/>
    </location>
</feature>
<feature type="sequence variant" id="VAR_038998" description="In dbSNP:rs45452996.">
    <original>S</original>
    <variation>N</variation>
    <location>
        <position position="937"/>
    </location>
</feature>
<feature type="sequence conflict" description="In Ref. 1; BAA07688." evidence="21" ref="1">
    <original>R</original>
    <variation>T</variation>
    <location>
        <position position="176"/>
    </location>
</feature>
<feature type="sequence conflict" description="In Ref. 1; BAA07688." evidence="21" ref="1">
    <original>E</original>
    <variation>Q</variation>
    <location>
        <position position="563"/>
    </location>
</feature>
<protein>
    <recommendedName>
        <fullName>Inactive phospholipase C-like protein 1</fullName>
        <shortName>PLC-L1</shortName>
    </recommendedName>
    <alternativeName>
        <fullName>Phospholipase C-deleted in lung carcinoma</fullName>
    </alternativeName>
    <alternativeName>
        <fullName>Phospholipase C-related but catalytically inactive protein</fullName>
        <shortName>PRIP</shortName>
    </alternativeName>
</protein>
<keyword id="KW-0025">Alternative splicing</keyword>
<keyword id="KW-0175">Coiled coil</keyword>
<keyword id="KW-0963">Cytoplasm</keyword>
<keyword id="KW-0597">Phosphoprotein</keyword>
<keyword id="KW-1267">Proteomics identification</keyword>
<keyword id="KW-1185">Reference proteome</keyword>
<keyword id="KW-0807">Transducer</keyword>
<sequence>MAEGAAGREDPAPPDAAGGEDDPRVGPDAAGDCVTAASGGRMRDRRSGVALPGAAGTPADSEAGLLEAARATPRRSSIIKDPSNQKCGGRKKTVSFSSMPSEKKISSANDCISFMQAGCELKKVRPNSRIYNRFFTLDTDLQALRWEPSKKDLEKAKLDISAIKEIRLGKNTETFRNNGLADQICEDCAFSILHGENYESLDLVANSADVANIWVSGLRYLVSRSKQPLDFMEGNQNTPRFMWLKTVFEAADVDGNGIMLEDTSVELIKQLNPTLKEAKIRLKFKEIQKSKEKLTTRVTEEEFCEAFCELCTRPEVYFLLVQISKNKEYLDANDLMLFLEAEQGVTHITEDICLDIIRRYELSEEGRQKGFLAIDGFTQYLLSSECDIFDPEQKKVAQDMTQPLSHYYINASHNTYLIEDQFRGPADINGYIRALKMGCRSVELDVSDGSDNEPILCNRNNMTTHVSFRSVIEVINKFAFVASEYPLILCLGNHCSLPQQKVMAQQMKKVFGNKLYTEAPLPSESYLPSPEKLKRMIIVKGKKLPSDPDVLEGEVTDEDEEAEMSRRMSVDYNGEQKQIRLCRELSDLVSICKSVQYRDFELSMKSQNYWEMCSFSETEASRIANEYPEDFVNYNKKFLSRIYPSAMRIDSSNLNPQDFWNCGCQIVAMNFQTPGPMMDLHTGWFLQNGGCGYVLRPSIMRDEVSYFSANTKGILPGVSPLALHIKIISGQNFPKPKGACAKGDVIDPYVCIEIHGIPADCSEQRTKTVQQNSDNPIFDETFEFQVNLPELAMIRFVVLDDDYIGDEFIGQYTIPFECLQPGYRHVPLRSFVGDIMEHVTLFVHIAITNRSGGGKAQKRSLSVRMGKKVREYTMLRNIGLKTIDDIFKIAVHPLREAIDMRENMQNAIVSIKELCGLPPIASLKQCLLTLSSRLITSDNTPSVSLVMKDSFPYLEPLGAIPDVQKKMLTAYDLMIQESRFLIEMADTVQEKIVQCQKAGMEFHEELHNLGAKEGLKGRKLNKATESFAWNITVLKGQGDLLKNAKNEAIENMKQIQLACLSCGLSKAPSSSAEAKSKRSLEAIEEKESSEENGKL</sequence>
<accession>Q15111</accession>
<accession>Q3MJ90</accession>
<accession>Q53SD3</accession>
<accession>Q7Z3S3</accession>
<reference key="1">
    <citation type="journal article" date="1995" name="Hum. Mol. Genet.">
        <title>Identification of a novel phospholipase C family gene at chromosome 2q33 that is homozygously deleted in human small cell lung carcinoma.</title>
        <authorList>
            <person name="Kohno T."/>
            <person name="Otsuka T."/>
            <person name="Takano H."/>
            <person name="Yamamoto T."/>
            <person name="Hamaguchi M."/>
            <person name="Terada M."/>
            <person name="Yokota J."/>
        </authorList>
    </citation>
    <scope>NUCLEOTIDE SEQUENCE [MRNA] (ISOFORM 2)</scope>
    <scope>TISSUE SPECIFICITY</scope>
</reference>
<reference key="2">
    <citation type="journal article" date="2005" name="Nature">
        <title>Generation and annotation of the DNA sequences of human chromosomes 2 and 4.</title>
        <authorList>
            <person name="Hillier L.W."/>
            <person name="Graves T.A."/>
            <person name="Fulton R.S."/>
            <person name="Fulton L.A."/>
            <person name="Pepin K.H."/>
            <person name="Minx P."/>
            <person name="Wagner-McPherson C."/>
            <person name="Layman D."/>
            <person name="Wylie K."/>
            <person name="Sekhon M."/>
            <person name="Becker M.C."/>
            <person name="Fewell G.A."/>
            <person name="Delehaunty K.D."/>
            <person name="Miner T.L."/>
            <person name="Nash W.E."/>
            <person name="Kremitzki C."/>
            <person name="Oddy L."/>
            <person name="Du H."/>
            <person name="Sun H."/>
            <person name="Bradshaw-Cordum H."/>
            <person name="Ali J."/>
            <person name="Carter J."/>
            <person name="Cordes M."/>
            <person name="Harris A."/>
            <person name="Isak A."/>
            <person name="van Brunt A."/>
            <person name="Nguyen C."/>
            <person name="Du F."/>
            <person name="Courtney L."/>
            <person name="Kalicki J."/>
            <person name="Ozersky P."/>
            <person name="Abbott S."/>
            <person name="Armstrong J."/>
            <person name="Belter E.A."/>
            <person name="Caruso L."/>
            <person name="Cedroni M."/>
            <person name="Cotton M."/>
            <person name="Davidson T."/>
            <person name="Desai A."/>
            <person name="Elliott G."/>
            <person name="Erb T."/>
            <person name="Fronick C."/>
            <person name="Gaige T."/>
            <person name="Haakenson W."/>
            <person name="Haglund K."/>
            <person name="Holmes A."/>
            <person name="Harkins R."/>
            <person name="Kim K."/>
            <person name="Kruchowski S.S."/>
            <person name="Strong C.M."/>
            <person name="Grewal N."/>
            <person name="Goyea E."/>
            <person name="Hou S."/>
            <person name="Levy A."/>
            <person name="Martinka S."/>
            <person name="Mead K."/>
            <person name="McLellan M.D."/>
            <person name="Meyer R."/>
            <person name="Randall-Maher J."/>
            <person name="Tomlinson C."/>
            <person name="Dauphin-Kohlberg S."/>
            <person name="Kozlowicz-Reilly A."/>
            <person name="Shah N."/>
            <person name="Swearengen-Shahid S."/>
            <person name="Snider J."/>
            <person name="Strong J.T."/>
            <person name="Thompson J."/>
            <person name="Yoakum M."/>
            <person name="Leonard S."/>
            <person name="Pearman C."/>
            <person name="Trani L."/>
            <person name="Radionenko M."/>
            <person name="Waligorski J.E."/>
            <person name="Wang C."/>
            <person name="Rock S.M."/>
            <person name="Tin-Wollam A.-M."/>
            <person name="Maupin R."/>
            <person name="Latreille P."/>
            <person name="Wendl M.C."/>
            <person name="Yang S.-P."/>
            <person name="Pohl C."/>
            <person name="Wallis J.W."/>
            <person name="Spieth J."/>
            <person name="Bieri T.A."/>
            <person name="Berkowicz N."/>
            <person name="Nelson J.O."/>
            <person name="Osborne J."/>
            <person name="Ding L."/>
            <person name="Meyer R."/>
            <person name="Sabo A."/>
            <person name="Shotland Y."/>
            <person name="Sinha P."/>
            <person name="Wohldmann P.E."/>
            <person name="Cook L.L."/>
            <person name="Hickenbotham M.T."/>
            <person name="Eldred J."/>
            <person name="Williams D."/>
            <person name="Jones T.A."/>
            <person name="She X."/>
            <person name="Ciccarelli F.D."/>
            <person name="Izaurralde E."/>
            <person name="Taylor J."/>
            <person name="Schmutz J."/>
            <person name="Myers R.M."/>
            <person name="Cox D.R."/>
            <person name="Huang X."/>
            <person name="McPherson J.D."/>
            <person name="Mardis E.R."/>
            <person name="Clifton S.W."/>
            <person name="Warren W.C."/>
            <person name="Chinwalla A.T."/>
            <person name="Eddy S.R."/>
            <person name="Marra M.A."/>
            <person name="Ovcharenko I."/>
            <person name="Furey T.S."/>
            <person name="Miller W."/>
            <person name="Eichler E.E."/>
            <person name="Bork P."/>
            <person name="Suyama M."/>
            <person name="Torrents D."/>
            <person name="Waterston R.H."/>
            <person name="Wilson R.K."/>
        </authorList>
    </citation>
    <scope>NUCLEOTIDE SEQUENCE [LARGE SCALE GENOMIC DNA]</scope>
</reference>
<reference key="3">
    <citation type="journal article" date="2004" name="Genome Res.">
        <title>The status, quality, and expansion of the NIH full-length cDNA project: the Mammalian Gene Collection (MGC).</title>
        <authorList>
            <consortium name="The MGC Project Team"/>
        </authorList>
    </citation>
    <scope>NUCLEOTIDE SEQUENCE [LARGE SCALE MRNA] (ISOFORM 2)</scope>
    <scope>VARIANT ILE-667</scope>
    <source>
        <tissue>Brain</tissue>
    </source>
</reference>
<reference key="4">
    <citation type="journal article" date="2007" name="BMC Genomics">
        <title>The full-ORF clone resource of the German cDNA consortium.</title>
        <authorList>
            <person name="Bechtel S."/>
            <person name="Rosenfelder H."/>
            <person name="Duda A."/>
            <person name="Schmidt C.P."/>
            <person name="Ernst U."/>
            <person name="Wellenreuther R."/>
            <person name="Mehrle A."/>
            <person name="Schuster C."/>
            <person name="Bahr A."/>
            <person name="Bloecker H."/>
            <person name="Heubner D."/>
            <person name="Hoerlein A."/>
            <person name="Michel G."/>
            <person name="Wedler H."/>
            <person name="Koehrer K."/>
            <person name="Ottenwaelder B."/>
            <person name="Poustka A."/>
            <person name="Wiemann S."/>
            <person name="Schupp I."/>
        </authorList>
    </citation>
    <scope>NUCLEOTIDE SEQUENCE [LARGE SCALE MRNA] OF 741-1095</scope>
    <source>
        <tissue>Rectum tumor</tissue>
    </source>
</reference>
<reference key="5">
    <citation type="journal article" date="2001" name="J. Biol. Chem.">
        <title>Interaction of p130 with, and consequent inhibition of, the catalytic subunit of protein phosphatase 1alpha.</title>
        <authorList>
            <person name="Yoshimura K."/>
            <person name="Takeuchi H."/>
            <person name="Sato O."/>
            <person name="Hidaka K."/>
            <person name="Doira N."/>
            <person name="Terunuma M."/>
            <person name="Harada K."/>
            <person name="Ogawa Y."/>
            <person name="Ito Y."/>
            <person name="Kanematsu T."/>
            <person name="Hirata M."/>
        </authorList>
    </citation>
    <scope>INTERACTION WITH PPP1C</scope>
</reference>
<reference key="6">
    <citation type="journal article" date="2002" name="EMBO J.">
        <title>Role of the PLC-related, catalytically inactive protein p130 in GABA(A) receptor function.</title>
        <authorList>
            <person name="Kanematsu T."/>
            <person name="Jang I.S."/>
            <person name="Yamaguchi T."/>
            <person name="Nagahama H."/>
            <person name="Yoshimura K."/>
            <person name="Hidaka K."/>
            <person name="Matsuda M."/>
            <person name="Takeuchi H."/>
            <person name="Misumi Y."/>
            <person name="Nakayama K."/>
            <person name="Yamamoto T."/>
            <person name="Akaike N."/>
            <person name="Hirata M."/>
            <person name="Nakayama K."/>
        </authorList>
    </citation>
    <scope>INTERACTION WITH GABARAP AND PPP1C</scope>
</reference>
<reference key="7">
    <citation type="journal article" date="2005" name="Mol. Cells">
        <title>PRIP, a novel Ins(1,4,5)P3 binding protein, functional significance in Ca2+ signaling and extension to neuroscience and beyond.</title>
        <authorList>
            <person name="Kanematsu T."/>
            <person name="Takeuchi H."/>
            <person name="Terunuma M."/>
            <person name="Hirata M."/>
        </authorList>
    </citation>
    <scope>INTERACTION WITH PPP1C; GABA A RECEPTOR SUBUNIT BETA; GABA A RECEPTOR AND SUBUNIT GAMMA-2</scope>
</reference>
<reference key="8">
    <citation type="journal article" date="2006" name="Adv. Enzyme Regul.">
        <title>Protein phosphatase regulation by PRIP, a PLC-related catalytically inactive protein -- implications in the phospho-modulation of the GABAA receptor.</title>
        <authorList>
            <person name="Yanagihori S."/>
            <person name="Terunuma M."/>
            <person name="Koyano K."/>
            <person name="Kanematsu T."/>
            <person name="Ho Ryu S."/>
            <person name="Hirata M."/>
        </authorList>
    </citation>
    <scope>INTERACTION WITH PPP1C</scope>
</reference>
<reference key="9">
    <citation type="journal article" date="2006" name="Gene">
        <title>Characterization of the human PRIP-1 gene structure and transcriptional regulation.</title>
        <authorList>
            <person name="Murakami A."/>
            <person name="Matsuda M."/>
            <person name="Nakasima A."/>
            <person name="Hirata M."/>
        </authorList>
    </citation>
    <scope>TISSUE SPECIFICITY</scope>
</reference>
<reference key="10">
    <citation type="journal article" date="2006" name="J. Biol. Chem.">
        <title>Modulation of GABA(A) receptor phosphorylation and membrane trafficking by phospholipase C-related inactive protein/protein phosphatase 1 and 2A signaling complex underlying brain-derived neurotrophic factor-dependent regulation of GABAergic inhibition.</title>
        <authorList>
            <person name="Jovanovic J.N."/>
            <person name="Takenaka K."/>
            <person name="Nakayama K.I."/>
            <person name="Fukami K."/>
            <person name="Takenawa T."/>
            <person name="Moss S.J."/>
            <person name="Nabekura J."/>
            <person name="Hirata M."/>
        </authorList>
    </citation>
    <scope>INTERACTION WITH GABA A RECEPTOR</scope>
</reference>
<reference key="11">
    <citation type="journal article" date="2007" name="J. Neurochem.">
        <title>Phospholipase C-related inactive protein is implicated in the constitutive internalization of GABAA receptors mediated by clathrin and AP2 adaptor complex.</title>
        <authorList>
            <person name="Kanematsu T."/>
            <person name="Fujii M."/>
            <person name="Mizokami A."/>
            <person name="Kittler J.T."/>
            <person name="Nabekura J."/>
            <person name="Moss S.J."/>
            <person name="Hirata M."/>
        </authorList>
    </citation>
    <scope>FUNCTION</scope>
</reference>
<reference key="12">
    <citation type="journal article" date="2013" name="J. Proteome Res.">
        <title>Toward a comprehensive characterization of a human cancer cell phosphoproteome.</title>
        <authorList>
            <person name="Zhou H."/>
            <person name="Di Palma S."/>
            <person name="Preisinger C."/>
            <person name="Peng M."/>
            <person name="Polat A.N."/>
            <person name="Heck A.J."/>
            <person name="Mohammed S."/>
        </authorList>
    </citation>
    <scope>PHOSPHORYLATION [LARGE SCALE ANALYSIS] AT SER-77 AND SER-95</scope>
    <scope>IDENTIFICATION BY MASS SPECTROMETRY [LARGE SCALE ANALYSIS]</scope>
    <source>
        <tissue>Erythroleukemia</tissue>
    </source>
</reference>
<organism>
    <name type="scientific">Homo sapiens</name>
    <name type="common">Human</name>
    <dbReference type="NCBI Taxonomy" id="9606"/>
    <lineage>
        <taxon>Eukaryota</taxon>
        <taxon>Metazoa</taxon>
        <taxon>Chordata</taxon>
        <taxon>Craniata</taxon>
        <taxon>Vertebrata</taxon>
        <taxon>Euteleostomi</taxon>
        <taxon>Mammalia</taxon>
        <taxon>Eutheria</taxon>
        <taxon>Euarchontoglires</taxon>
        <taxon>Primates</taxon>
        <taxon>Haplorrhini</taxon>
        <taxon>Catarrhini</taxon>
        <taxon>Hominidae</taxon>
        <taxon>Homo</taxon>
    </lineage>
</organism>
<gene>
    <name type="primary">PLCL1</name>
</gene>
<evidence type="ECO:0000250" key="1"/>
<evidence type="ECO:0000250" key="2">
    <source>
        <dbReference type="UniProtKB" id="Q3USB7"/>
    </source>
</evidence>
<evidence type="ECO:0000250" key="3">
    <source>
        <dbReference type="UniProtKB" id="Q62688"/>
    </source>
</evidence>
<evidence type="ECO:0000255" key="4"/>
<evidence type="ECO:0000255" key="5">
    <source>
        <dbReference type="PROSITE-ProRule" id="PRU00041"/>
    </source>
</evidence>
<evidence type="ECO:0000255" key="6">
    <source>
        <dbReference type="PROSITE-ProRule" id="PRU00145"/>
    </source>
</evidence>
<evidence type="ECO:0000255" key="7">
    <source>
        <dbReference type="PROSITE-ProRule" id="PRU00270"/>
    </source>
</evidence>
<evidence type="ECO:0000255" key="8">
    <source>
        <dbReference type="PROSITE-ProRule" id="PRU00271"/>
    </source>
</evidence>
<evidence type="ECO:0000256" key="9">
    <source>
        <dbReference type="SAM" id="MobiDB-lite"/>
    </source>
</evidence>
<evidence type="ECO:0000269" key="10">
    <source>
    </source>
</evidence>
<evidence type="ECO:0000269" key="11">
    <source>
    </source>
</evidence>
<evidence type="ECO:0000269" key="12">
    <source>
    </source>
</evidence>
<evidence type="ECO:0000269" key="13">
    <source>
    </source>
</evidence>
<evidence type="ECO:0000269" key="14">
    <source>
    </source>
</evidence>
<evidence type="ECO:0000269" key="15">
    <source>
    </source>
</evidence>
<evidence type="ECO:0000269" key="16">
    <source>
    </source>
</evidence>
<evidence type="ECO:0000269" key="17">
    <source>
    </source>
</evidence>
<evidence type="ECO:0000269" key="18">
    <source>
    </source>
</evidence>
<evidence type="ECO:0000303" key="19">
    <source>
    </source>
</evidence>
<evidence type="ECO:0000303" key="20">
    <source>
    </source>
</evidence>
<evidence type="ECO:0000305" key="21"/>
<evidence type="ECO:0007744" key="22">
    <source>
    </source>
</evidence>
<proteinExistence type="evidence at protein level"/>